<evidence type="ECO:0000255" key="1">
    <source>
        <dbReference type="HAMAP-Rule" id="MF_00036"/>
    </source>
</evidence>
<sequence length="873" mass="100732">MLSSKEIRQKWITFFESKNHLKLESKSLIPVDDPSLLWINSGVATLKDYFSGKKTPPSPRIVNSQKSIRTNDIENVGITARHHTFFEMLGNFSIGDYFKKEALAFAKEFVLDVLKLEKEKLYFTYYHEDLETKQIWLDLGFDPSHLIAGSRKTNFWDVGMGPCGPNTEIFYDRGPKYDPRGVELLKEDIENDRYIEIWNIVFSTFNNDGKNNYSELKLKNIDTGAGFERIVSILQNAPTNYDTDLFLPIIRAIEKLTNKKYVVENYFQNEPVQREINTYFKIIADHMRSVANAIGDGAGVSNVGRDYIIRRLIRRAYRTGIQLGIKDEAFLYKLVPVIKDSLIFDYDTKHVAKVIKDEELLFSKTIDQGKKILEKEFEKSKKIDASIVFKMFDTYGYPVELTKEMAKEKGVEISLEEFEKYRQEHELKSKSKKGDGMKKVINFLANIDKKVDEFVGYDTLETTSKILYLFNSESKLNKLEGQGYFILDKTPFYATSGGQKHDQGYVEQDGKKFKILEVFKDKNWNHVHLVKGEIDSSKELKCVVDAKNRKNLERNHSATHLLFKVLRDQIGPFVVQLGSNNNEKRLTFDFPSQNKPSKEKIKEIEKQVRKIIELSIDRQYSNETIDKAKEMGAIITIEETEYMDPTNVRIVTFKNITSDLCGGTHIPNTKLIENFKIISVENKGTGIFRISAITTEKLVRAFNQEHFDNLIEQQQNIIKKIQKINPSFKYKNQFKSDDLEQRQVEVEESILALQQEFKKALKSQENVEINFENLEFENIANYKVYINLEADKNTIKAQGAQLREKFDDLLIILASVEKNSTILTIASKKYDSNKIFNLLKSEYSLKGGGNAILVQGFTSDKITKDKILKVLNG</sequence>
<dbReference type="EC" id="6.1.1.7" evidence="1"/>
<dbReference type="EMBL" id="AL445565">
    <property type="protein sequence ID" value="CAC13730.1"/>
    <property type="molecule type" value="Genomic_DNA"/>
</dbReference>
<dbReference type="PIR" id="E90581">
    <property type="entry name" value="E90581"/>
</dbReference>
<dbReference type="RefSeq" id="WP_010925358.1">
    <property type="nucleotide sequence ID" value="NC_002771.1"/>
</dbReference>
<dbReference type="SMR" id="Q98Q12"/>
<dbReference type="STRING" id="272635.gene:17577164"/>
<dbReference type="KEGG" id="mpu:MYPU_5570"/>
<dbReference type="eggNOG" id="COG0013">
    <property type="taxonomic scope" value="Bacteria"/>
</dbReference>
<dbReference type="HOGENOM" id="CLU_004485_1_1_14"/>
<dbReference type="BioCyc" id="MPUL272635:G1GT6-570-MONOMER"/>
<dbReference type="Proteomes" id="UP000000528">
    <property type="component" value="Chromosome"/>
</dbReference>
<dbReference type="GO" id="GO:0005829">
    <property type="term" value="C:cytosol"/>
    <property type="evidence" value="ECO:0007669"/>
    <property type="project" value="TreeGrafter"/>
</dbReference>
<dbReference type="GO" id="GO:0004813">
    <property type="term" value="F:alanine-tRNA ligase activity"/>
    <property type="evidence" value="ECO:0007669"/>
    <property type="project" value="UniProtKB-UniRule"/>
</dbReference>
<dbReference type="GO" id="GO:0002161">
    <property type="term" value="F:aminoacyl-tRNA deacylase activity"/>
    <property type="evidence" value="ECO:0007669"/>
    <property type="project" value="TreeGrafter"/>
</dbReference>
<dbReference type="GO" id="GO:0005524">
    <property type="term" value="F:ATP binding"/>
    <property type="evidence" value="ECO:0007669"/>
    <property type="project" value="UniProtKB-UniRule"/>
</dbReference>
<dbReference type="GO" id="GO:0000049">
    <property type="term" value="F:tRNA binding"/>
    <property type="evidence" value="ECO:0007669"/>
    <property type="project" value="UniProtKB-KW"/>
</dbReference>
<dbReference type="GO" id="GO:0008270">
    <property type="term" value="F:zinc ion binding"/>
    <property type="evidence" value="ECO:0007669"/>
    <property type="project" value="UniProtKB-UniRule"/>
</dbReference>
<dbReference type="GO" id="GO:0006419">
    <property type="term" value="P:alanyl-tRNA aminoacylation"/>
    <property type="evidence" value="ECO:0007669"/>
    <property type="project" value="UniProtKB-UniRule"/>
</dbReference>
<dbReference type="CDD" id="cd00673">
    <property type="entry name" value="AlaRS_core"/>
    <property type="match status" value="1"/>
</dbReference>
<dbReference type="FunFam" id="3.30.930.10:FF:000046">
    <property type="entry name" value="Alanine--tRNA ligase"/>
    <property type="match status" value="1"/>
</dbReference>
<dbReference type="FunFam" id="3.30.980.10:FF:000004">
    <property type="entry name" value="Alanine--tRNA ligase, cytoplasmic"/>
    <property type="match status" value="1"/>
</dbReference>
<dbReference type="Gene3D" id="2.40.30.130">
    <property type="match status" value="1"/>
</dbReference>
<dbReference type="Gene3D" id="3.30.930.10">
    <property type="entry name" value="Bira Bifunctional Protein, Domain 2"/>
    <property type="match status" value="1"/>
</dbReference>
<dbReference type="Gene3D" id="3.30.980.10">
    <property type="entry name" value="Threonyl-trna Synthetase, Chain A, domain 2"/>
    <property type="match status" value="1"/>
</dbReference>
<dbReference type="HAMAP" id="MF_00036_B">
    <property type="entry name" value="Ala_tRNA_synth_B"/>
    <property type="match status" value="1"/>
</dbReference>
<dbReference type="InterPro" id="IPR045864">
    <property type="entry name" value="aa-tRNA-synth_II/BPL/LPL"/>
</dbReference>
<dbReference type="InterPro" id="IPR002318">
    <property type="entry name" value="Ala-tRNA-lgiase_IIc"/>
</dbReference>
<dbReference type="InterPro" id="IPR018162">
    <property type="entry name" value="Ala-tRNA-ligase_IIc_anticod-bd"/>
</dbReference>
<dbReference type="InterPro" id="IPR018165">
    <property type="entry name" value="Ala-tRNA-synth_IIc_core"/>
</dbReference>
<dbReference type="InterPro" id="IPR018164">
    <property type="entry name" value="Ala-tRNA-synth_IIc_N"/>
</dbReference>
<dbReference type="InterPro" id="IPR050058">
    <property type="entry name" value="Ala-tRNA_ligase"/>
</dbReference>
<dbReference type="InterPro" id="IPR023033">
    <property type="entry name" value="Ala_tRNA_ligase_euk/bac"/>
</dbReference>
<dbReference type="InterPro" id="IPR018163">
    <property type="entry name" value="Thr/Ala-tRNA-synth_IIc_edit"/>
</dbReference>
<dbReference type="InterPro" id="IPR009000">
    <property type="entry name" value="Transl_B-barrel_sf"/>
</dbReference>
<dbReference type="InterPro" id="IPR012947">
    <property type="entry name" value="tRNA_SAD"/>
</dbReference>
<dbReference type="NCBIfam" id="TIGR00344">
    <property type="entry name" value="alaS"/>
    <property type="match status" value="1"/>
</dbReference>
<dbReference type="PANTHER" id="PTHR11777:SF9">
    <property type="entry name" value="ALANINE--TRNA LIGASE, CYTOPLASMIC"/>
    <property type="match status" value="1"/>
</dbReference>
<dbReference type="PANTHER" id="PTHR11777">
    <property type="entry name" value="ALANYL-TRNA SYNTHETASE"/>
    <property type="match status" value="1"/>
</dbReference>
<dbReference type="Pfam" id="PF01411">
    <property type="entry name" value="tRNA-synt_2c"/>
    <property type="match status" value="1"/>
</dbReference>
<dbReference type="Pfam" id="PF07973">
    <property type="entry name" value="tRNA_SAD"/>
    <property type="match status" value="1"/>
</dbReference>
<dbReference type="PRINTS" id="PR00980">
    <property type="entry name" value="TRNASYNTHALA"/>
</dbReference>
<dbReference type="SMART" id="SM00863">
    <property type="entry name" value="tRNA_SAD"/>
    <property type="match status" value="1"/>
</dbReference>
<dbReference type="SUPFAM" id="SSF55681">
    <property type="entry name" value="Class II aaRS and biotin synthetases"/>
    <property type="match status" value="1"/>
</dbReference>
<dbReference type="SUPFAM" id="SSF101353">
    <property type="entry name" value="Putative anticodon-binding domain of alanyl-tRNA synthetase (AlaRS)"/>
    <property type="match status" value="1"/>
</dbReference>
<dbReference type="SUPFAM" id="SSF55186">
    <property type="entry name" value="ThrRS/AlaRS common domain"/>
    <property type="match status" value="1"/>
</dbReference>
<dbReference type="SUPFAM" id="SSF50447">
    <property type="entry name" value="Translation proteins"/>
    <property type="match status" value="1"/>
</dbReference>
<dbReference type="PROSITE" id="PS50860">
    <property type="entry name" value="AA_TRNA_LIGASE_II_ALA"/>
    <property type="match status" value="1"/>
</dbReference>
<comment type="function">
    <text evidence="1">Catalyzes the attachment of alanine to tRNA(Ala) in a two-step reaction: alanine is first activated by ATP to form Ala-AMP and then transferred to the acceptor end of tRNA(Ala). Also edits incorrectly charged Ser-tRNA(Ala) and Gly-tRNA(Ala) via its editing domain.</text>
</comment>
<comment type="catalytic activity">
    <reaction evidence="1">
        <text>tRNA(Ala) + L-alanine + ATP = L-alanyl-tRNA(Ala) + AMP + diphosphate</text>
        <dbReference type="Rhea" id="RHEA:12540"/>
        <dbReference type="Rhea" id="RHEA-COMP:9657"/>
        <dbReference type="Rhea" id="RHEA-COMP:9923"/>
        <dbReference type="ChEBI" id="CHEBI:30616"/>
        <dbReference type="ChEBI" id="CHEBI:33019"/>
        <dbReference type="ChEBI" id="CHEBI:57972"/>
        <dbReference type="ChEBI" id="CHEBI:78442"/>
        <dbReference type="ChEBI" id="CHEBI:78497"/>
        <dbReference type="ChEBI" id="CHEBI:456215"/>
        <dbReference type="EC" id="6.1.1.7"/>
    </reaction>
</comment>
<comment type="cofactor">
    <cofactor evidence="1">
        <name>Zn(2+)</name>
        <dbReference type="ChEBI" id="CHEBI:29105"/>
    </cofactor>
    <text evidence="1">Binds 1 zinc ion per subunit.</text>
</comment>
<comment type="subcellular location">
    <subcellularLocation>
        <location evidence="1">Cytoplasm</location>
    </subcellularLocation>
</comment>
<comment type="domain">
    <text evidence="1">Consists of three domains; the N-terminal catalytic domain, the editing domain and the C-terminal C-Ala domain. The editing domain removes incorrectly charged amino acids, while the C-Ala domain, along with tRNA(Ala), serves as a bridge to cooperatively bring together the editing and aminoacylation centers thus stimulating deacylation of misacylated tRNAs.</text>
</comment>
<comment type="similarity">
    <text evidence="1">Belongs to the class-II aminoacyl-tRNA synthetase family.</text>
</comment>
<reference key="1">
    <citation type="journal article" date="2001" name="Nucleic Acids Res.">
        <title>The complete genome sequence of the murine respiratory pathogen Mycoplasma pulmonis.</title>
        <authorList>
            <person name="Chambaud I."/>
            <person name="Heilig R."/>
            <person name="Ferris S."/>
            <person name="Barbe V."/>
            <person name="Samson D."/>
            <person name="Galisson F."/>
            <person name="Moszer I."/>
            <person name="Dybvig K."/>
            <person name="Wroblewski H."/>
            <person name="Viari A."/>
            <person name="Rocha E.P.C."/>
            <person name="Blanchard A."/>
        </authorList>
    </citation>
    <scope>NUCLEOTIDE SEQUENCE [LARGE SCALE GENOMIC DNA]</scope>
    <source>
        <strain>UAB CTIP</strain>
    </source>
</reference>
<organism>
    <name type="scientific">Mycoplasmopsis pulmonis (strain UAB CTIP)</name>
    <name type="common">Mycoplasma pulmonis</name>
    <dbReference type="NCBI Taxonomy" id="272635"/>
    <lineage>
        <taxon>Bacteria</taxon>
        <taxon>Bacillati</taxon>
        <taxon>Mycoplasmatota</taxon>
        <taxon>Mycoplasmoidales</taxon>
        <taxon>Metamycoplasmataceae</taxon>
        <taxon>Mycoplasmopsis</taxon>
    </lineage>
</organism>
<feature type="chain" id="PRO_0000075157" description="Alanine--tRNA ligase">
    <location>
        <begin position="1"/>
        <end position="873"/>
    </location>
</feature>
<feature type="binding site" evidence="1">
    <location>
        <position position="556"/>
    </location>
    <ligand>
        <name>Zn(2+)</name>
        <dbReference type="ChEBI" id="CHEBI:29105"/>
    </ligand>
</feature>
<feature type="binding site" evidence="1">
    <location>
        <position position="560"/>
    </location>
    <ligand>
        <name>Zn(2+)</name>
        <dbReference type="ChEBI" id="CHEBI:29105"/>
    </ligand>
</feature>
<feature type="binding site" evidence="1">
    <location>
        <position position="661"/>
    </location>
    <ligand>
        <name>Zn(2+)</name>
        <dbReference type="ChEBI" id="CHEBI:29105"/>
    </ligand>
</feature>
<feature type="binding site" evidence="1">
    <location>
        <position position="665"/>
    </location>
    <ligand>
        <name>Zn(2+)</name>
        <dbReference type="ChEBI" id="CHEBI:29105"/>
    </ligand>
</feature>
<accession>Q98Q12</accession>
<gene>
    <name evidence="1" type="primary">alaS</name>
    <name type="ordered locus">MYPU_5570</name>
</gene>
<keyword id="KW-0030">Aminoacyl-tRNA synthetase</keyword>
<keyword id="KW-0067">ATP-binding</keyword>
<keyword id="KW-0963">Cytoplasm</keyword>
<keyword id="KW-0436">Ligase</keyword>
<keyword id="KW-0479">Metal-binding</keyword>
<keyword id="KW-0547">Nucleotide-binding</keyword>
<keyword id="KW-0648">Protein biosynthesis</keyword>
<keyword id="KW-1185">Reference proteome</keyword>
<keyword id="KW-0694">RNA-binding</keyword>
<keyword id="KW-0820">tRNA-binding</keyword>
<keyword id="KW-0862">Zinc</keyword>
<name>SYA_MYCPU</name>
<proteinExistence type="inferred from homology"/>
<protein>
    <recommendedName>
        <fullName evidence="1">Alanine--tRNA ligase</fullName>
        <ecNumber evidence="1">6.1.1.7</ecNumber>
    </recommendedName>
    <alternativeName>
        <fullName evidence="1">Alanyl-tRNA synthetase</fullName>
        <shortName evidence="1">AlaRS</shortName>
    </alternativeName>
</protein>